<reference key="1">
    <citation type="journal article" date="2003" name="Genome Res.">
        <title>Comparative genome analysis of Vibrio vulnificus, a marine pathogen.</title>
        <authorList>
            <person name="Chen C.-Y."/>
            <person name="Wu K.-M."/>
            <person name="Chang Y.-C."/>
            <person name="Chang C.-H."/>
            <person name="Tsai H.-C."/>
            <person name="Liao T.-L."/>
            <person name="Liu Y.-M."/>
            <person name="Chen H.-J."/>
            <person name="Shen A.B.-T."/>
            <person name="Li J.-C."/>
            <person name="Su T.-L."/>
            <person name="Shao C.-P."/>
            <person name="Lee C.-T."/>
            <person name="Hor L.-I."/>
            <person name="Tsai S.-F."/>
        </authorList>
    </citation>
    <scope>NUCLEOTIDE SEQUENCE [LARGE SCALE GENOMIC DNA]</scope>
    <source>
        <strain>YJ016</strain>
    </source>
</reference>
<name>G6PI_VIBVY</name>
<evidence type="ECO:0000255" key="1">
    <source>
        <dbReference type="HAMAP-Rule" id="MF_00473"/>
    </source>
</evidence>
<organism>
    <name type="scientific">Vibrio vulnificus (strain YJ016)</name>
    <dbReference type="NCBI Taxonomy" id="196600"/>
    <lineage>
        <taxon>Bacteria</taxon>
        <taxon>Pseudomonadati</taxon>
        <taxon>Pseudomonadota</taxon>
        <taxon>Gammaproteobacteria</taxon>
        <taxon>Vibrionales</taxon>
        <taxon>Vibrionaceae</taxon>
        <taxon>Vibrio</taxon>
    </lineage>
</organism>
<dbReference type="EC" id="5.3.1.9" evidence="1"/>
<dbReference type="EMBL" id="BA000037">
    <property type="protein sequence ID" value="BAC95739.1"/>
    <property type="molecule type" value="Genomic_DNA"/>
</dbReference>
<dbReference type="RefSeq" id="WP_011151270.1">
    <property type="nucleotide sequence ID" value="NC_005139.1"/>
</dbReference>
<dbReference type="SMR" id="Q7MH97"/>
<dbReference type="STRING" id="672.VV93_v1c27040"/>
<dbReference type="KEGG" id="vvy:VV2975"/>
<dbReference type="PATRIC" id="fig|196600.6.peg.2953"/>
<dbReference type="eggNOG" id="COG0166">
    <property type="taxonomic scope" value="Bacteria"/>
</dbReference>
<dbReference type="HOGENOM" id="CLU_017947_3_1_6"/>
<dbReference type="UniPathway" id="UPA00109">
    <property type="reaction ID" value="UER00181"/>
</dbReference>
<dbReference type="UniPathway" id="UPA00138"/>
<dbReference type="Proteomes" id="UP000002675">
    <property type="component" value="Chromosome I"/>
</dbReference>
<dbReference type="GO" id="GO:0005829">
    <property type="term" value="C:cytosol"/>
    <property type="evidence" value="ECO:0007669"/>
    <property type="project" value="TreeGrafter"/>
</dbReference>
<dbReference type="GO" id="GO:0097367">
    <property type="term" value="F:carbohydrate derivative binding"/>
    <property type="evidence" value="ECO:0007669"/>
    <property type="project" value="InterPro"/>
</dbReference>
<dbReference type="GO" id="GO:0004347">
    <property type="term" value="F:glucose-6-phosphate isomerase activity"/>
    <property type="evidence" value="ECO:0007669"/>
    <property type="project" value="UniProtKB-UniRule"/>
</dbReference>
<dbReference type="GO" id="GO:0048029">
    <property type="term" value="F:monosaccharide binding"/>
    <property type="evidence" value="ECO:0007669"/>
    <property type="project" value="TreeGrafter"/>
</dbReference>
<dbReference type="GO" id="GO:0006094">
    <property type="term" value="P:gluconeogenesis"/>
    <property type="evidence" value="ECO:0007669"/>
    <property type="project" value="UniProtKB-UniRule"/>
</dbReference>
<dbReference type="GO" id="GO:0051156">
    <property type="term" value="P:glucose 6-phosphate metabolic process"/>
    <property type="evidence" value="ECO:0007669"/>
    <property type="project" value="TreeGrafter"/>
</dbReference>
<dbReference type="GO" id="GO:0006096">
    <property type="term" value="P:glycolytic process"/>
    <property type="evidence" value="ECO:0007669"/>
    <property type="project" value="UniProtKB-UniRule"/>
</dbReference>
<dbReference type="CDD" id="cd05015">
    <property type="entry name" value="SIS_PGI_1"/>
    <property type="match status" value="1"/>
</dbReference>
<dbReference type="CDD" id="cd05016">
    <property type="entry name" value="SIS_PGI_2"/>
    <property type="match status" value="1"/>
</dbReference>
<dbReference type="FunFam" id="1.10.1390.10:FF:000001">
    <property type="entry name" value="Glucose-6-phosphate isomerase"/>
    <property type="match status" value="1"/>
</dbReference>
<dbReference type="FunFam" id="3.40.50.10490:FF:000004">
    <property type="entry name" value="Glucose-6-phosphate isomerase"/>
    <property type="match status" value="1"/>
</dbReference>
<dbReference type="Gene3D" id="1.10.1390.10">
    <property type="match status" value="1"/>
</dbReference>
<dbReference type="Gene3D" id="3.40.50.10490">
    <property type="entry name" value="Glucose-6-phosphate isomerase like protein, domain 1"/>
    <property type="match status" value="2"/>
</dbReference>
<dbReference type="HAMAP" id="MF_00473">
    <property type="entry name" value="G6P_isomerase"/>
    <property type="match status" value="1"/>
</dbReference>
<dbReference type="InterPro" id="IPR001672">
    <property type="entry name" value="G6P_Isomerase"/>
</dbReference>
<dbReference type="InterPro" id="IPR023096">
    <property type="entry name" value="G6P_Isomerase_C"/>
</dbReference>
<dbReference type="InterPro" id="IPR018189">
    <property type="entry name" value="Phosphoglucose_isomerase_CS"/>
</dbReference>
<dbReference type="InterPro" id="IPR046348">
    <property type="entry name" value="SIS_dom_sf"/>
</dbReference>
<dbReference type="InterPro" id="IPR035476">
    <property type="entry name" value="SIS_PGI_1"/>
</dbReference>
<dbReference type="InterPro" id="IPR035482">
    <property type="entry name" value="SIS_PGI_2"/>
</dbReference>
<dbReference type="NCBIfam" id="NF001211">
    <property type="entry name" value="PRK00179.1"/>
    <property type="match status" value="1"/>
</dbReference>
<dbReference type="PANTHER" id="PTHR11469">
    <property type="entry name" value="GLUCOSE-6-PHOSPHATE ISOMERASE"/>
    <property type="match status" value="1"/>
</dbReference>
<dbReference type="PANTHER" id="PTHR11469:SF1">
    <property type="entry name" value="GLUCOSE-6-PHOSPHATE ISOMERASE"/>
    <property type="match status" value="1"/>
</dbReference>
<dbReference type="Pfam" id="PF00342">
    <property type="entry name" value="PGI"/>
    <property type="match status" value="1"/>
</dbReference>
<dbReference type="PRINTS" id="PR00662">
    <property type="entry name" value="G6PISOMERASE"/>
</dbReference>
<dbReference type="SUPFAM" id="SSF53697">
    <property type="entry name" value="SIS domain"/>
    <property type="match status" value="1"/>
</dbReference>
<dbReference type="PROSITE" id="PS00765">
    <property type="entry name" value="P_GLUCOSE_ISOMERASE_1"/>
    <property type="match status" value="1"/>
</dbReference>
<dbReference type="PROSITE" id="PS00174">
    <property type="entry name" value="P_GLUCOSE_ISOMERASE_2"/>
    <property type="match status" value="1"/>
</dbReference>
<dbReference type="PROSITE" id="PS51463">
    <property type="entry name" value="P_GLUCOSE_ISOMERASE_3"/>
    <property type="match status" value="1"/>
</dbReference>
<sequence length="550" mass="60744">MLKTINPTQTQAWNALTAHFESAQDMDLKDLFAQDAARFDKFSARFGSDILVDYSKNLINEETLKHLFALAKETELSAAIKAMFSGEAINQTEGRAVLHTALRNRSNQPVLVDGEDVMPAVNAVLEKMKSFTDRVIGGEWKGYTGKAITDIVNIGIGGSDLGPYMVTEALAPYKNHLNLHFVSNVDGTHIVETLKKVDPETTLFLIASKTFTTQETMTNAHTARDWFLATAGDQAHVAKHFAALSTNAPAVSEFGIDTDNMFEFWDWVGGRYSLWSAIGLSIALAVGYDNFVELLEGAHEMDNHFVSTELESNIPVILALIGIWYNNFHGAESEAILPYDQYMHRFAAYFQQGNMESNGKYVDRNGNPVTYQTGPIIWGEPGTNGQHAFYQLIHQGTKLIPCDFIAPAVSHNPAGDHHQKLMSNFFAQTEALAFGKNEATVKAELVKAGKNAEEVAAIAPFKVFEGNRPTNSILVKQITPRTLGNLIAMYEHKIFVQGVIWNIFSFDQWGVELGKQLANQILPELADDSEISSHDSSTNGLINAFKAFKA</sequence>
<comment type="function">
    <text evidence="1">Catalyzes the reversible isomerization of glucose-6-phosphate to fructose-6-phosphate.</text>
</comment>
<comment type="catalytic activity">
    <reaction evidence="1">
        <text>alpha-D-glucose 6-phosphate = beta-D-fructose 6-phosphate</text>
        <dbReference type="Rhea" id="RHEA:11816"/>
        <dbReference type="ChEBI" id="CHEBI:57634"/>
        <dbReference type="ChEBI" id="CHEBI:58225"/>
        <dbReference type="EC" id="5.3.1.9"/>
    </reaction>
</comment>
<comment type="pathway">
    <text evidence="1">Carbohydrate biosynthesis; gluconeogenesis.</text>
</comment>
<comment type="pathway">
    <text evidence="1">Carbohydrate degradation; glycolysis; D-glyceraldehyde 3-phosphate and glycerone phosphate from D-glucose: step 2/4.</text>
</comment>
<comment type="subcellular location">
    <subcellularLocation>
        <location evidence="1">Cytoplasm</location>
    </subcellularLocation>
</comment>
<comment type="similarity">
    <text evidence="1">Belongs to the GPI family.</text>
</comment>
<keyword id="KW-0963">Cytoplasm</keyword>
<keyword id="KW-0312">Gluconeogenesis</keyword>
<keyword id="KW-0324">Glycolysis</keyword>
<keyword id="KW-0413">Isomerase</keyword>
<feature type="chain" id="PRO_0000180766" description="Glucose-6-phosphate isomerase">
    <location>
        <begin position="1"/>
        <end position="550"/>
    </location>
</feature>
<feature type="active site" description="Proton donor" evidence="1">
    <location>
        <position position="356"/>
    </location>
</feature>
<feature type="active site" evidence="1">
    <location>
        <position position="387"/>
    </location>
</feature>
<feature type="active site" evidence="1">
    <location>
        <position position="515"/>
    </location>
</feature>
<accession>Q7MH97</accession>
<gene>
    <name evidence="1" type="primary">pgi</name>
    <name type="ordered locus">VV2975</name>
</gene>
<protein>
    <recommendedName>
        <fullName evidence="1">Glucose-6-phosphate isomerase</fullName>
        <shortName evidence="1">GPI</shortName>
        <ecNumber evidence="1">5.3.1.9</ecNumber>
    </recommendedName>
    <alternativeName>
        <fullName evidence="1">Phosphoglucose isomerase</fullName>
        <shortName evidence="1">PGI</shortName>
    </alternativeName>
    <alternativeName>
        <fullName evidence="1">Phosphohexose isomerase</fullName>
        <shortName evidence="1">PHI</shortName>
    </alternativeName>
</protein>
<proteinExistence type="inferred from homology"/>